<organism>
    <name type="scientific">Corynebacterium glutamicum (strain ATCC 13032 / DSM 20300 / JCM 1318 / BCRC 11384 / CCUG 27702 / LMG 3730 / NBRC 12168 / NCIMB 10025 / NRRL B-2784 / 534)</name>
    <dbReference type="NCBI Taxonomy" id="196627"/>
    <lineage>
        <taxon>Bacteria</taxon>
        <taxon>Bacillati</taxon>
        <taxon>Actinomycetota</taxon>
        <taxon>Actinomycetes</taxon>
        <taxon>Mycobacteriales</taxon>
        <taxon>Corynebacteriaceae</taxon>
        <taxon>Corynebacterium</taxon>
    </lineage>
</organism>
<proteinExistence type="inferred from homology"/>
<gene>
    <name type="primary">rpf1</name>
    <name type="ordered locus">Cgl0819</name>
    <name type="ordered locus">cg0936</name>
</gene>
<accession>Q6M6W5</accession>
<accession>Q8NS60</accession>
<keyword id="KW-0378">Hydrolase</keyword>
<keyword id="KW-1185">Reference proteome</keyword>
<keyword id="KW-0964">Secreted</keyword>
<keyword id="KW-0732">Signal</keyword>
<sequence>MGRHSTKTSSAFTKLAASTIAFGAAATIMAPSASAAPDSDWDRLAQCESGGNWAINTGNGYHGGLQFSASTWAAYGGQEFATYAYQATREQQIAVAERTLAGQGWGAWPACSASLGLNSAPTQRDLSATTSTPEPAAAAPAVAEYNAPAANIAVGSTDLNTIKSTYGAVTGTLAQYGITVPAEVESYYNAFVG</sequence>
<dbReference type="EC" id="3.-.-.-"/>
<dbReference type="EMBL" id="BA000036">
    <property type="protein sequence ID" value="BAB98212.1"/>
    <property type="status" value="ALT_INIT"/>
    <property type="molecule type" value="Genomic_DNA"/>
</dbReference>
<dbReference type="EMBL" id="BX927150">
    <property type="protein sequence ID" value="CAF19525.1"/>
    <property type="molecule type" value="Genomic_DNA"/>
</dbReference>
<dbReference type="RefSeq" id="NP_600048.1">
    <property type="nucleotide sequence ID" value="NC_003450.3"/>
</dbReference>
<dbReference type="RefSeq" id="WP_003862355.1">
    <property type="nucleotide sequence ID" value="NC_006958.1"/>
</dbReference>
<dbReference type="SMR" id="Q6M6W5"/>
<dbReference type="STRING" id="196627.cg0936"/>
<dbReference type="CAZy" id="GH23">
    <property type="family name" value="Glycoside Hydrolase Family 23"/>
</dbReference>
<dbReference type="GeneID" id="1018814"/>
<dbReference type="KEGG" id="cgb:cg0936"/>
<dbReference type="KEGG" id="cgl:Cgl0819"/>
<dbReference type="PATRIC" id="fig|196627.13.peg.801"/>
<dbReference type="eggNOG" id="COG1652">
    <property type="taxonomic scope" value="Bacteria"/>
</dbReference>
<dbReference type="HOGENOM" id="CLU_045108_1_0_11"/>
<dbReference type="OrthoDB" id="1404170at2"/>
<dbReference type="BioCyc" id="CORYNE:G18NG-10388-MONOMER"/>
<dbReference type="Proteomes" id="UP000000582">
    <property type="component" value="Chromosome"/>
</dbReference>
<dbReference type="Proteomes" id="UP000001009">
    <property type="component" value="Chromosome"/>
</dbReference>
<dbReference type="GO" id="GO:0005576">
    <property type="term" value="C:extracellular region"/>
    <property type="evidence" value="ECO:0007669"/>
    <property type="project" value="UniProtKB-SubCell"/>
</dbReference>
<dbReference type="GO" id="GO:0016787">
    <property type="term" value="F:hydrolase activity"/>
    <property type="evidence" value="ECO:0007669"/>
    <property type="project" value="UniProtKB-KW"/>
</dbReference>
<dbReference type="CDD" id="cd13925">
    <property type="entry name" value="RPF"/>
    <property type="match status" value="1"/>
</dbReference>
<dbReference type="Gene3D" id="1.10.530.10">
    <property type="match status" value="1"/>
</dbReference>
<dbReference type="Gene3D" id="1.10.1200.100">
    <property type="entry name" value="conserved protein domain from corynebacterium diphtheriae"/>
    <property type="match status" value="1"/>
</dbReference>
<dbReference type="InterPro" id="IPR023346">
    <property type="entry name" value="Lysozyme-like_dom_sf"/>
</dbReference>
<dbReference type="InterPro" id="IPR010618">
    <property type="entry name" value="RPF"/>
</dbReference>
<dbReference type="InterPro" id="IPR021630">
    <property type="entry name" value="Rpf1_C"/>
</dbReference>
<dbReference type="InterPro" id="IPR044905">
    <property type="entry name" value="Rpf1_C_sf"/>
</dbReference>
<dbReference type="Pfam" id="PF11574">
    <property type="entry name" value="Rpf1_C"/>
    <property type="match status" value="1"/>
</dbReference>
<dbReference type="Pfam" id="PF06737">
    <property type="entry name" value="Transglycosylas"/>
    <property type="match status" value="1"/>
</dbReference>
<dbReference type="SUPFAM" id="SSF53955">
    <property type="entry name" value="Lysozyme-like"/>
    <property type="match status" value="1"/>
</dbReference>
<evidence type="ECO:0000250" key="1"/>
<evidence type="ECO:0000255" key="2"/>
<evidence type="ECO:0000269" key="3">
    <source>
    </source>
</evidence>
<evidence type="ECO:0000305" key="4"/>
<evidence type="ECO:0000305" key="5">
    <source>
    </source>
</evidence>
<comment type="function">
    <text evidence="1">Factor that stimulates resuscitation of dormant cells. Has peptidoglycan (PG) hydrolytic activity. Active in the pM concentration range. Has little to no effect on actively-growing cells. PG fragments could either directly activate the resuscitation pathway of dormant bacteria or serve as a substrate for endogenous Rpf, resulting in low molecular weight products with resuscitation activity (By similarity).</text>
</comment>
<comment type="subcellular location">
    <subcellularLocation>
        <location evidence="5">Secreted</location>
    </subcellularLocation>
    <text>Upon overexpression.</text>
</comment>
<comment type="disruption phenotype">
    <text evidence="3">Not essential; a double rpf1-rpf2 disruption mutant is also viable. The double mutant displays a prolonged lag phase and slower growth after transfer of long-stored cells into fresh medium.</text>
</comment>
<comment type="similarity">
    <text evidence="4">Belongs to the transglycosylase family. Rpf subfamily.</text>
</comment>
<comment type="sequence caution" evidence="4">
    <conflict type="erroneous initiation">
        <sequence resource="EMBL-CDS" id="BAB98212"/>
    </conflict>
    <text>Extended N-terminus.</text>
</comment>
<feature type="signal peptide" evidence="2">
    <location>
        <begin position="1"/>
        <end position="35"/>
    </location>
</feature>
<feature type="chain" id="PRO_0000421069" description="Resuscitation-promoting factor Rpf1">
    <location>
        <begin position="36"/>
        <end position="193"/>
    </location>
</feature>
<protein>
    <recommendedName>
        <fullName>Resuscitation-promoting factor Rpf1</fullName>
        <ecNumber>3.-.-.-</ecNumber>
    </recommendedName>
</protein>
<reference key="1">
    <citation type="journal article" date="2003" name="Appl. Microbiol. Biotechnol.">
        <title>The Corynebacterium glutamicum genome: features and impacts on biotechnological processes.</title>
        <authorList>
            <person name="Ikeda M."/>
            <person name="Nakagawa S."/>
        </authorList>
    </citation>
    <scope>NUCLEOTIDE SEQUENCE [LARGE SCALE GENOMIC DNA]</scope>
    <source>
        <strain>ATCC 13032 / DSM 20300 / JCM 1318 / BCRC 11384 / CCUG 27702 / LMG 3730 / NBRC 12168 / NCIMB 10025 / NRRL B-2784 / 534</strain>
    </source>
</reference>
<reference key="2">
    <citation type="journal article" date="2003" name="J. Biotechnol.">
        <title>The complete Corynebacterium glutamicum ATCC 13032 genome sequence and its impact on the production of L-aspartate-derived amino acids and vitamins.</title>
        <authorList>
            <person name="Kalinowski J."/>
            <person name="Bathe B."/>
            <person name="Bartels D."/>
            <person name="Bischoff N."/>
            <person name="Bott M."/>
            <person name="Burkovski A."/>
            <person name="Dusch N."/>
            <person name="Eggeling L."/>
            <person name="Eikmanns B.J."/>
            <person name="Gaigalat L."/>
            <person name="Goesmann A."/>
            <person name="Hartmann M."/>
            <person name="Huthmacher K."/>
            <person name="Kraemer R."/>
            <person name="Linke B."/>
            <person name="McHardy A.C."/>
            <person name="Meyer F."/>
            <person name="Moeckel B."/>
            <person name="Pfefferle W."/>
            <person name="Puehler A."/>
            <person name="Rey D.A."/>
            <person name="Rueckert C."/>
            <person name="Rupp O."/>
            <person name="Sahm H."/>
            <person name="Wendisch V.F."/>
            <person name="Wiegraebe I."/>
            <person name="Tauch A."/>
        </authorList>
    </citation>
    <scope>NUCLEOTIDE SEQUENCE [LARGE SCALE GENOMIC DNA]</scope>
    <source>
        <strain>ATCC 13032 / DSM 20300 / JCM 1318 / BCRC 11384 / CCUG 27702 / LMG 3730 / NBRC 12168 / NCIMB 10025 / NRRL B-2784 / 534</strain>
    </source>
</reference>
<reference key="3">
    <citation type="journal article" date="2004" name="Arch. Microbiol.">
        <title>The glycosylated cell surface protein Rpf2, containing a resuscitation-promoting factor motif, is involved in intercellular communication of Corynebacterium glutamicum.</title>
        <authorList>
            <person name="Hartmann M."/>
            <person name="Barsch A."/>
            <person name="Niehaus K."/>
            <person name="Puhler A."/>
            <person name="Tauch A."/>
            <person name="Kalinowski J."/>
        </authorList>
    </citation>
    <scope>SUBCELLULAR LOCATION</scope>
    <scope>DISRUPTION PHENOTYPE</scope>
    <source>
        <strain>ATCC 13032 / DSM 20300 / JCM 1318 / BCRC 11384 / CCUG 27702 / LMG 3730 / NBRC 12168 / NCIMB 10025 / NRRL B-2784 / 534</strain>
    </source>
</reference>
<name>RPF1_CORGL</name>